<organism>
    <name type="scientific">Yersinia pestis bv. Antiqua (strain Nepal516)</name>
    <dbReference type="NCBI Taxonomy" id="377628"/>
    <lineage>
        <taxon>Bacteria</taxon>
        <taxon>Pseudomonadati</taxon>
        <taxon>Pseudomonadota</taxon>
        <taxon>Gammaproteobacteria</taxon>
        <taxon>Enterobacterales</taxon>
        <taxon>Yersiniaceae</taxon>
        <taxon>Yersinia</taxon>
    </lineage>
</organism>
<proteinExistence type="inferred from homology"/>
<accession>Q1CLJ3</accession>
<accession>C4GPZ7</accession>
<evidence type="ECO:0000255" key="1">
    <source>
        <dbReference type="HAMAP-Rule" id="MF_00605"/>
    </source>
</evidence>
<feature type="chain" id="PRO_0000257493" description="tRNA (guanine-N(1)-)-methyltransferase">
    <location>
        <begin position="1"/>
        <end position="246"/>
    </location>
</feature>
<feature type="binding site" evidence="1">
    <location>
        <position position="113"/>
    </location>
    <ligand>
        <name>S-adenosyl-L-methionine</name>
        <dbReference type="ChEBI" id="CHEBI:59789"/>
    </ligand>
</feature>
<feature type="binding site" evidence="1">
    <location>
        <begin position="133"/>
        <end position="138"/>
    </location>
    <ligand>
        <name>S-adenosyl-L-methionine</name>
        <dbReference type="ChEBI" id="CHEBI:59789"/>
    </ligand>
</feature>
<gene>
    <name evidence="1" type="primary">trmD</name>
    <name type="ordered locus">YPN_0805</name>
    <name type="ORF">YP516_0862</name>
</gene>
<reference key="1">
    <citation type="journal article" date="2006" name="J. Bacteriol.">
        <title>Complete genome sequence of Yersinia pestis strains Antiqua and Nepal516: evidence of gene reduction in an emerging pathogen.</title>
        <authorList>
            <person name="Chain P.S.G."/>
            <person name="Hu P."/>
            <person name="Malfatti S.A."/>
            <person name="Radnedge L."/>
            <person name="Larimer F."/>
            <person name="Vergez L.M."/>
            <person name="Worsham P."/>
            <person name="Chu M.C."/>
            <person name="Andersen G.L."/>
        </authorList>
    </citation>
    <scope>NUCLEOTIDE SEQUENCE [LARGE SCALE GENOMIC DNA]</scope>
    <source>
        <strain>Nepal516</strain>
    </source>
</reference>
<reference key="2">
    <citation type="submission" date="2009-04" db="EMBL/GenBank/DDBJ databases">
        <title>Yersinia pestis Nepal516A whole genome shotgun sequencing project.</title>
        <authorList>
            <person name="Plunkett G. III"/>
            <person name="Anderson B.D."/>
            <person name="Baumler D.J."/>
            <person name="Burland V."/>
            <person name="Cabot E.L."/>
            <person name="Glasner J.D."/>
            <person name="Mau B."/>
            <person name="Neeno-Eckwall E."/>
            <person name="Perna N.T."/>
            <person name="Munk A.C."/>
            <person name="Tapia R."/>
            <person name="Green L.D."/>
            <person name="Rogers Y.C."/>
            <person name="Detter J.C."/>
            <person name="Bruce D.C."/>
            <person name="Brettin T.S."/>
        </authorList>
    </citation>
    <scope>NUCLEOTIDE SEQUENCE [LARGE SCALE GENOMIC DNA]</scope>
    <source>
        <strain>Nepal516</strain>
    </source>
</reference>
<dbReference type="EC" id="2.1.1.228" evidence="1"/>
<dbReference type="EMBL" id="CP000305">
    <property type="protein sequence ID" value="ABG17137.1"/>
    <property type="molecule type" value="Genomic_DNA"/>
</dbReference>
<dbReference type="EMBL" id="ACNQ01000007">
    <property type="protein sequence ID" value="EEO78003.1"/>
    <property type="molecule type" value="Genomic_DNA"/>
</dbReference>
<dbReference type="RefSeq" id="WP_002222284.1">
    <property type="nucleotide sequence ID" value="NZ_ACNQ01000007.1"/>
</dbReference>
<dbReference type="SMR" id="Q1CLJ3"/>
<dbReference type="GeneID" id="57975424"/>
<dbReference type="KEGG" id="ypn:YPN_0805"/>
<dbReference type="HOGENOM" id="CLU_047363_0_1_6"/>
<dbReference type="Proteomes" id="UP000008936">
    <property type="component" value="Chromosome"/>
</dbReference>
<dbReference type="GO" id="GO:0005829">
    <property type="term" value="C:cytosol"/>
    <property type="evidence" value="ECO:0007669"/>
    <property type="project" value="TreeGrafter"/>
</dbReference>
<dbReference type="GO" id="GO:0052906">
    <property type="term" value="F:tRNA (guanine(37)-N1)-methyltransferase activity"/>
    <property type="evidence" value="ECO:0007669"/>
    <property type="project" value="UniProtKB-UniRule"/>
</dbReference>
<dbReference type="GO" id="GO:0002939">
    <property type="term" value="P:tRNA N1-guanine methylation"/>
    <property type="evidence" value="ECO:0007669"/>
    <property type="project" value="TreeGrafter"/>
</dbReference>
<dbReference type="CDD" id="cd18080">
    <property type="entry name" value="TrmD-like"/>
    <property type="match status" value="1"/>
</dbReference>
<dbReference type="FunFam" id="1.10.1270.20:FF:000001">
    <property type="entry name" value="tRNA (guanine-N(1)-)-methyltransferase"/>
    <property type="match status" value="1"/>
</dbReference>
<dbReference type="FunFam" id="3.40.1280.10:FF:000001">
    <property type="entry name" value="tRNA (guanine-N(1)-)-methyltransferase"/>
    <property type="match status" value="1"/>
</dbReference>
<dbReference type="Gene3D" id="3.40.1280.10">
    <property type="match status" value="1"/>
</dbReference>
<dbReference type="Gene3D" id="1.10.1270.20">
    <property type="entry name" value="tRNA(m1g37)methyltransferase, domain 2"/>
    <property type="match status" value="1"/>
</dbReference>
<dbReference type="HAMAP" id="MF_00605">
    <property type="entry name" value="TrmD"/>
    <property type="match status" value="1"/>
</dbReference>
<dbReference type="InterPro" id="IPR029028">
    <property type="entry name" value="Alpha/beta_knot_MTases"/>
</dbReference>
<dbReference type="InterPro" id="IPR023148">
    <property type="entry name" value="tRNA_m1G_MeTrfase_C_sf"/>
</dbReference>
<dbReference type="InterPro" id="IPR002649">
    <property type="entry name" value="tRNA_m1G_MeTrfase_TrmD"/>
</dbReference>
<dbReference type="InterPro" id="IPR029026">
    <property type="entry name" value="tRNA_m1G_MTases_N"/>
</dbReference>
<dbReference type="InterPro" id="IPR016009">
    <property type="entry name" value="tRNA_MeTrfase_TRMD/TRM10"/>
</dbReference>
<dbReference type="NCBIfam" id="NF000648">
    <property type="entry name" value="PRK00026.1"/>
    <property type="match status" value="1"/>
</dbReference>
<dbReference type="NCBIfam" id="TIGR00088">
    <property type="entry name" value="trmD"/>
    <property type="match status" value="1"/>
</dbReference>
<dbReference type="PANTHER" id="PTHR46417">
    <property type="entry name" value="TRNA (GUANINE-N(1)-)-METHYLTRANSFERASE"/>
    <property type="match status" value="1"/>
</dbReference>
<dbReference type="PANTHER" id="PTHR46417:SF1">
    <property type="entry name" value="TRNA (GUANINE-N(1)-)-METHYLTRANSFERASE"/>
    <property type="match status" value="1"/>
</dbReference>
<dbReference type="Pfam" id="PF01746">
    <property type="entry name" value="tRNA_m1G_MT"/>
    <property type="match status" value="1"/>
</dbReference>
<dbReference type="PIRSF" id="PIRSF000386">
    <property type="entry name" value="tRNA_mtase"/>
    <property type="match status" value="1"/>
</dbReference>
<dbReference type="SUPFAM" id="SSF75217">
    <property type="entry name" value="alpha/beta knot"/>
    <property type="match status" value="1"/>
</dbReference>
<comment type="function">
    <text evidence="1">Specifically methylates guanosine-37 in various tRNAs.</text>
</comment>
<comment type="catalytic activity">
    <reaction evidence="1">
        <text>guanosine(37) in tRNA + S-adenosyl-L-methionine = N(1)-methylguanosine(37) in tRNA + S-adenosyl-L-homocysteine + H(+)</text>
        <dbReference type="Rhea" id="RHEA:36899"/>
        <dbReference type="Rhea" id="RHEA-COMP:10145"/>
        <dbReference type="Rhea" id="RHEA-COMP:10147"/>
        <dbReference type="ChEBI" id="CHEBI:15378"/>
        <dbReference type="ChEBI" id="CHEBI:57856"/>
        <dbReference type="ChEBI" id="CHEBI:59789"/>
        <dbReference type="ChEBI" id="CHEBI:73542"/>
        <dbReference type="ChEBI" id="CHEBI:74269"/>
        <dbReference type="EC" id="2.1.1.228"/>
    </reaction>
</comment>
<comment type="subunit">
    <text evidence="1">Homodimer.</text>
</comment>
<comment type="subcellular location">
    <subcellularLocation>
        <location evidence="1">Cytoplasm</location>
    </subcellularLocation>
</comment>
<comment type="similarity">
    <text evidence="1">Belongs to the RNA methyltransferase TrmD family.</text>
</comment>
<sequence>MWIGVISLFPEMFRAITDYGVTGRAVKNGLLSVQCWSPRDFTYDRHRTVDDRPYGGGPGMLMMVQPLREAIHAAKAAAGEGAKVIYLSPQGRKLDQQGVCELAMNQKMILVCGRYEGVDERVIKTEIDEEWSIGDYVLSGGELPAMTLIDSVSRFIPGVLGHHASAEEDSFVDGLLDCPHYTRPEVLEGMEVPPVLLSGNHAEIRRWRLKQSLGRTWLRRPELLESLALTDEQMVLLAEFQREHKP</sequence>
<name>TRMD_YERPN</name>
<protein>
    <recommendedName>
        <fullName evidence="1">tRNA (guanine-N(1)-)-methyltransferase</fullName>
        <ecNumber evidence="1">2.1.1.228</ecNumber>
    </recommendedName>
    <alternativeName>
        <fullName evidence="1">M1G-methyltransferase</fullName>
    </alternativeName>
    <alternativeName>
        <fullName evidence="1">tRNA [GM37] methyltransferase</fullName>
    </alternativeName>
</protein>
<keyword id="KW-0963">Cytoplasm</keyword>
<keyword id="KW-0489">Methyltransferase</keyword>
<keyword id="KW-0949">S-adenosyl-L-methionine</keyword>
<keyword id="KW-0808">Transferase</keyword>
<keyword id="KW-0819">tRNA processing</keyword>